<comment type="function">
    <text evidence="2">Neurotoxin that induces excitatory symptoms in mice following intracranial administration. No symptoms are observed after intraperitoneal and intravenous (tail vein) injections.</text>
</comment>
<comment type="subcellular location">
    <subcellularLocation>
        <location evidence="2">Secreted</location>
    </subcellularLocation>
</comment>
<comment type="tissue specificity">
    <text evidence="5">Expressed by the venom duct.</text>
</comment>
<comment type="domain">
    <text evidence="4">The cysteine framework is XXIII (C-C-C-CC-C).</text>
</comment>
<comment type="mass spectrometry" mass="4823.0" method="Unknown" evidence="2"/>
<comment type="miscellaneous">
    <text evidence="5">Negative results: does not affect (up to 50 uM) the Nav1.7/SCN9A channel, Drosophila Shaker channel and rat KCa1.1/KCNMA1 channel expressed in HEK293 cell, as well as on whole cell current of neurons from neonatal rat hippocampus and prefrontal cortex. In addition, no detectable effect is observed on either action potential amplitude and duration or Na(+) and Ca(2+) current amplitude and kinetics when im23a is tested on action potentials and depolarization-activated Na(+) and Ca(2+) currents in rat DRG neurons (PubMed:22399292).</text>
</comment>
<comment type="similarity">
    <text evidence="4">Belongs to the conotoxin K superfamily.</text>
</comment>
<reference key="1">
    <citation type="journal article" date="2012" name="J. Biol. Chem.">
        <title>A helical conotoxin from Conus imperialis has a novel cysteine framework and defines a new superfamily.</title>
        <authorList>
            <person name="Ye M."/>
            <person name="Khoo K.K."/>
            <person name="Xu S."/>
            <person name="Zhou M."/>
            <person name="Boonyalai N."/>
            <person name="Perugini M.A."/>
            <person name="Shao X."/>
            <person name="Chi C."/>
            <person name="Galea C.A."/>
            <person name="Wang C."/>
            <person name="Norton R.S."/>
        </authorList>
    </citation>
    <scope>NUCLEOTIDE SEQUENCE [MRNA]</scope>
    <scope>PARTIAL PROTEIN SEQUENCE</scope>
    <scope>FUNCTION</scope>
    <scope>DISULFIDE BONDS</scope>
    <scope>MASS SPECTROMETRY</scope>
    <scope>STRUCTURE BY NMR</scope>
    <scope>SUBCELLULAR LOCATION</scope>
    <source>
        <tissue>Venom</tissue>
        <tissue>Venom duct</tissue>
    </source>
</reference>
<evidence type="ECO:0000255" key="1"/>
<evidence type="ECO:0000269" key="2">
    <source>
    </source>
</evidence>
<evidence type="ECO:0000303" key="3">
    <source>
    </source>
</evidence>
<evidence type="ECO:0000305" key="4"/>
<evidence type="ECO:0000305" key="5">
    <source>
    </source>
</evidence>
<evidence type="ECO:0000312" key="6">
    <source>
        <dbReference type="PDB" id="2LMZ"/>
    </source>
</evidence>
<evidence type="ECO:0007829" key="7">
    <source>
        <dbReference type="PDB" id="2LMZ"/>
    </source>
</evidence>
<name>CANA_CONIM</name>
<dbReference type="EMBL" id="FJ375238">
    <property type="protein sequence ID" value="ACQ65998.1"/>
    <property type="molecule type" value="mRNA"/>
</dbReference>
<dbReference type="PDB" id="2LMZ">
    <property type="method" value="NMR"/>
    <property type="chains" value="A=31-72"/>
</dbReference>
<dbReference type="PDBsum" id="2LMZ"/>
<dbReference type="BMRB" id="D0PX84"/>
<dbReference type="SMR" id="D0PX84"/>
<dbReference type="EvolutionaryTrace" id="D0PX84"/>
<dbReference type="GO" id="GO:0005576">
    <property type="term" value="C:extracellular region"/>
    <property type="evidence" value="ECO:0007669"/>
    <property type="project" value="UniProtKB-SubCell"/>
</dbReference>
<dbReference type="GO" id="GO:0090729">
    <property type="term" value="F:toxin activity"/>
    <property type="evidence" value="ECO:0007669"/>
    <property type="project" value="UniProtKB-KW"/>
</dbReference>
<dbReference type="Gene3D" id="1.10.10.2920">
    <property type="match status" value="1"/>
</dbReference>
<feature type="signal peptide" evidence="1">
    <location>
        <begin position="1"/>
        <end position="22"/>
    </location>
</feature>
<feature type="propeptide" id="PRO_0000417032">
    <location>
        <begin position="23"/>
        <end position="28"/>
    </location>
</feature>
<feature type="chain" id="PRO_5000825649" description="Conotoxin im23a">
    <location>
        <begin position="31"/>
        <end position="72"/>
    </location>
</feature>
<feature type="disulfide bond" evidence="2 6">
    <location>
        <begin position="34"/>
        <end position="41"/>
    </location>
</feature>
<feature type="disulfide bond" evidence="2 6">
    <location>
        <begin position="45"/>
        <end position="55"/>
    </location>
</feature>
<feature type="disulfide bond" evidence="2 6">
    <location>
        <begin position="56"/>
        <end position="71"/>
    </location>
</feature>
<feature type="helix" evidence="7">
    <location>
        <begin position="38"/>
        <end position="47"/>
    </location>
</feature>
<feature type="helix" evidence="7">
    <location>
        <begin position="52"/>
        <end position="61"/>
    </location>
</feature>
<feature type="turn" evidence="7">
    <location>
        <begin position="68"/>
        <end position="70"/>
    </location>
</feature>
<organism>
    <name type="scientific">Conus imperialis</name>
    <name type="common">Imperial cone</name>
    <dbReference type="NCBI Taxonomy" id="35631"/>
    <lineage>
        <taxon>Eukaryota</taxon>
        <taxon>Metazoa</taxon>
        <taxon>Spiralia</taxon>
        <taxon>Lophotrochozoa</taxon>
        <taxon>Mollusca</taxon>
        <taxon>Gastropoda</taxon>
        <taxon>Caenogastropoda</taxon>
        <taxon>Neogastropoda</taxon>
        <taxon>Conoidea</taxon>
        <taxon>Conidae</taxon>
        <taxon>Conus</taxon>
        <taxon>Stephanoconus</taxon>
    </lineage>
</organism>
<sequence length="72" mass="8040">MIMRMTLTLFVLVVMTAASASGDALTEAKRIPYCGQTGAECYSWCIKQDLSKDWCCDFVKDIRMNPPADKCP</sequence>
<keyword id="KW-0002">3D-structure</keyword>
<keyword id="KW-0165">Cleavage on pair of basic residues</keyword>
<keyword id="KW-0903">Direct protein sequencing</keyword>
<keyword id="KW-1015">Disulfide bond</keyword>
<keyword id="KW-0528">Neurotoxin</keyword>
<keyword id="KW-0964">Secreted</keyword>
<keyword id="KW-0732">Signal</keyword>
<keyword id="KW-0800">Toxin</keyword>
<proteinExistence type="evidence at protein level"/>
<accession>D0PX84</accession>
<protein>
    <recommendedName>
        <fullName evidence="3">Conotoxin im23a</fullName>
    </recommendedName>
    <alternativeName>
        <fullName evidence="3">Im23.1</fullName>
    </alternativeName>
    <alternativeName>
        <fullName>U1-CTX-Ci1a</fullName>
    </alternativeName>
</protein>